<keyword id="KW-0238">DNA-binding</keyword>
<keyword id="KW-0489">Methyltransferase</keyword>
<keyword id="KW-0680">Restriction system</keyword>
<keyword id="KW-0949">S-adenosyl-L-methionine</keyword>
<keyword id="KW-0808">Transferase</keyword>
<protein>
    <recommendedName>
        <fullName evidence="4">Type II methyltransferase M.NgoMIV</fullName>
        <shortName evidence="4">M.NgoMIV</shortName>
        <ecNumber>2.1.1.37</ecNumber>
    </recommendedName>
    <alternativeName>
        <fullName>Cytosine-specific methyltransferase NgoMIV</fullName>
    </alternativeName>
    <alternativeName>
        <fullName evidence="5">DNA methylase M.NgoMI</fullName>
        <shortName evidence="5">M.NgoMI</shortName>
    </alternativeName>
    <alternativeName>
        <fullName>Modification methylase NgoMIV</fullName>
    </alternativeName>
</protein>
<sequence length="312" mass="35226">MQFTSLEICAGAGGQALGLERAGFSHVALIEIEPSACQTLRLNRPDWNVIEGDVRLFQGEGYDGIDLLAGGVPCPPFSKAGKQLGKDDERDLFPEAIRLAKETDPKAIMLENVRGLLDPKFENYRNHITEQFAKLGYLGQWKLLYAADYGVSQLRPRVLFVALKNEYTNFFKWPEPNSEQPKTVGELLFDLMSENNWQGAHNWRLKAAQIAPTLVAVQKNTAVLTWDLHDPNAHGRSWVWMVQVCGIVRRLKTFTGMPRLTVRMTARIQGFPDDWQFFGKKTPMYRQIGNAFPPPVAEAVGRQIIKALKKEN</sequence>
<organism>
    <name type="scientific">Neisseria gonorrhoeae</name>
    <dbReference type="NCBI Taxonomy" id="485"/>
    <lineage>
        <taxon>Bacteria</taxon>
        <taxon>Pseudomonadati</taxon>
        <taxon>Pseudomonadota</taxon>
        <taxon>Betaproteobacteria</taxon>
        <taxon>Neisseriales</taxon>
        <taxon>Neisseriaceae</taxon>
        <taxon>Neisseria</taxon>
    </lineage>
</organism>
<name>MTM4_NEIGO</name>
<evidence type="ECO:0000255" key="1">
    <source>
        <dbReference type="PROSITE-ProRule" id="PRU01016"/>
    </source>
</evidence>
<evidence type="ECO:0000255" key="2">
    <source>
        <dbReference type="PROSITE-ProRule" id="PRU10018"/>
    </source>
</evidence>
<evidence type="ECO:0000269" key="3">
    <source>
    </source>
</evidence>
<evidence type="ECO:0000303" key="4">
    <source>
    </source>
</evidence>
<evidence type="ECO:0000303" key="5">
    <source>
    </source>
</evidence>
<evidence type="ECO:0000305" key="6">
    <source>
    </source>
</evidence>
<accession>P31033</accession>
<comment type="function">
    <text evidence="3 4">A methylase, recognizes the double-stranded sequence 5'-GCCGGC-3', methylates C-2 on both strands, and protects the DNA from cleavage by the NgoMIV endonuclease.</text>
</comment>
<comment type="catalytic activity">
    <reaction evidence="2">
        <text>a 2'-deoxycytidine in DNA + S-adenosyl-L-methionine = a 5-methyl-2'-deoxycytidine in DNA + S-adenosyl-L-homocysteine + H(+)</text>
        <dbReference type="Rhea" id="RHEA:13681"/>
        <dbReference type="Rhea" id="RHEA-COMP:11369"/>
        <dbReference type="Rhea" id="RHEA-COMP:11370"/>
        <dbReference type="ChEBI" id="CHEBI:15378"/>
        <dbReference type="ChEBI" id="CHEBI:57856"/>
        <dbReference type="ChEBI" id="CHEBI:59789"/>
        <dbReference type="ChEBI" id="CHEBI:85452"/>
        <dbReference type="ChEBI" id="CHEBI:85454"/>
        <dbReference type="EC" id="2.1.1.37"/>
    </reaction>
</comment>
<comment type="similarity">
    <text evidence="1">Belongs to the class I-like SAM-binding methyltransferase superfamily. C5-methyltransferase family.</text>
</comment>
<comment type="caution">
    <text evidence="6">Was originally known as M.NgoMI.</text>
</comment>
<feature type="chain" id="PRO_0000087899" description="Type II methyltransferase M.NgoMIV">
    <location>
        <begin position="1"/>
        <end position="312"/>
    </location>
</feature>
<feature type="domain" description="SAM-dependent MTase C5-type" evidence="1">
    <location>
        <begin position="3"/>
        <end position="311"/>
    </location>
</feature>
<feature type="active site" evidence="1 2">
    <location>
        <position position="74"/>
    </location>
</feature>
<dbReference type="EC" id="2.1.1.37"/>
<dbReference type="EMBL" id="M86915">
    <property type="status" value="NOT_ANNOTATED_CDS"/>
    <property type="molecule type" value="Genomic_DNA"/>
</dbReference>
<dbReference type="PIR" id="A42709">
    <property type="entry name" value="A42709"/>
</dbReference>
<dbReference type="SMR" id="P31033"/>
<dbReference type="REBASE" id="165908">
    <property type="entry name" value="M.Nse506ORF6588P"/>
</dbReference>
<dbReference type="PRO" id="PR:P31033"/>
<dbReference type="GO" id="GO:0003886">
    <property type="term" value="F:DNA (cytosine-5-)-methyltransferase activity"/>
    <property type="evidence" value="ECO:0007669"/>
    <property type="project" value="UniProtKB-EC"/>
</dbReference>
<dbReference type="GO" id="GO:0003677">
    <property type="term" value="F:DNA binding"/>
    <property type="evidence" value="ECO:0007669"/>
    <property type="project" value="UniProtKB-KW"/>
</dbReference>
<dbReference type="GO" id="GO:0009307">
    <property type="term" value="P:DNA restriction-modification system"/>
    <property type="evidence" value="ECO:0007669"/>
    <property type="project" value="UniProtKB-KW"/>
</dbReference>
<dbReference type="GO" id="GO:0032259">
    <property type="term" value="P:methylation"/>
    <property type="evidence" value="ECO:0007669"/>
    <property type="project" value="UniProtKB-KW"/>
</dbReference>
<dbReference type="GO" id="GO:0044027">
    <property type="term" value="P:negative regulation of gene expression via chromosomal CpG island methylation"/>
    <property type="evidence" value="ECO:0007669"/>
    <property type="project" value="TreeGrafter"/>
</dbReference>
<dbReference type="CDD" id="cd00315">
    <property type="entry name" value="Cyt_C5_DNA_methylase"/>
    <property type="match status" value="1"/>
</dbReference>
<dbReference type="Gene3D" id="3.40.50.150">
    <property type="entry name" value="Vaccinia Virus protein VP39"/>
    <property type="match status" value="2"/>
</dbReference>
<dbReference type="InterPro" id="IPR050390">
    <property type="entry name" value="C5-Methyltransferase"/>
</dbReference>
<dbReference type="InterPro" id="IPR018117">
    <property type="entry name" value="C5_DNA_meth_AS"/>
</dbReference>
<dbReference type="InterPro" id="IPR001525">
    <property type="entry name" value="C5_MeTfrase"/>
</dbReference>
<dbReference type="InterPro" id="IPR031303">
    <property type="entry name" value="C5_meth_CS"/>
</dbReference>
<dbReference type="InterPro" id="IPR029063">
    <property type="entry name" value="SAM-dependent_MTases_sf"/>
</dbReference>
<dbReference type="NCBIfam" id="TIGR00675">
    <property type="entry name" value="dcm"/>
    <property type="match status" value="1"/>
</dbReference>
<dbReference type="PANTHER" id="PTHR10629">
    <property type="entry name" value="CYTOSINE-SPECIFIC METHYLTRANSFERASE"/>
    <property type="match status" value="1"/>
</dbReference>
<dbReference type="PANTHER" id="PTHR10629:SF52">
    <property type="entry name" value="DNA (CYTOSINE-5)-METHYLTRANSFERASE 1"/>
    <property type="match status" value="1"/>
</dbReference>
<dbReference type="Pfam" id="PF00145">
    <property type="entry name" value="DNA_methylase"/>
    <property type="match status" value="1"/>
</dbReference>
<dbReference type="PRINTS" id="PR00105">
    <property type="entry name" value="C5METTRFRASE"/>
</dbReference>
<dbReference type="SUPFAM" id="SSF53335">
    <property type="entry name" value="S-adenosyl-L-methionine-dependent methyltransferases"/>
    <property type="match status" value="1"/>
</dbReference>
<dbReference type="PROSITE" id="PS00094">
    <property type="entry name" value="C5_MTASE_1"/>
    <property type="match status" value="1"/>
</dbReference>
<dbReference type="PROSITE" id="PS00095">
    <property type="entry name" value="C5_MTASE_2"/>
    <property type="match status" value="1"/>
</dbReference>
<dbReference type="PROSITE" id="PS51679">
    <property type="entry name" value="SAM_MT_C5"/>
    <property type="match status" value="1"/>
</dbReference>
<gene>
    <name type="primary">ngoMIVM</name>
</gene>
<reference key="1">
    <citation type="journal article" date="1992" name="J. Bacteriol.">
        <title>Construction of a Neisseria gonorrhoeae MS11 derivative deficient in NgoMI restriction and modification.</title>
        <authorList>
            <person name="Stein D.C."/>
            <person name="Chien R."/>
            <person name="Seifert H.S."/>
        </authorList>
    </citation>
    <scope>NUCLEOTIDE SEQUENCE [GENOMIC DNA]</scope>
    <scope>FUNCTION</scope>
    <source>
        <strain>MS11</strain>
    </source>
</reference>
<reference key="2">
    <citation type="journal article" date="2003" name="Nucleic Acids Res.">
        <title>A nomenclature for restriction enzymes, DNA methyltransferases, homing endonucleases and their genes.</title>
        <authorList>
            <person name="Roberts R.J."/>
            <person name="Belfort M."/>
            <person name="Bestor T."/>
            <person name="Bhagwat A.S."/>
            <person name="Bickle T.A."/>
            <person name="Bitinaite J."/>
            <person name="Blumenthal R.M."/>
            <person name="Degtyarev S.K."/>
            <person name="Dryden D.T."/>
            <person name="Dybvig K."/>
            <person name="Firman K."/>
            <person name="Gromova E.S."/>
            <person name="Gumport R.I."/>
            <person name="Halford S.E."/>
            <person name="Hattman S."/>
            <person name="Heitman J."/>
            <person name="Hornby D.P."/>
            <person name="Janulaitis A."/>
            <person name="Jeltsch A."/>
            <person name="Josephsen J."/>
            <person name="Kiss A."/>
            <person name="Klaenhammer T.R."/>
            <person name="Kobayashi I."/>
            <person name="Kong H."/>
            <person name="Krueger D.H."/>
            <person name="Lacks S."/>
            <person name="Marinus M.G."/>
            <person name="Miyahara M."/>
            <person name="Morgan R.D."/>
            <person name="Murray N.E."/>
            <person name="Nagaraja V."/>
            <person name="Piekarowicz A."/>
            <person name="Pingoud A."/>
            <person name="Raleigh E."/>
            <person name="Rao D.N."/>
            <person name="Reich N."/>
            <person name="Repin V.E."/>
            <person name="Selker E.U."/>
            <person name="Shaw P.C."/>
            <person name="Stein D.C."/>
            <person name="Stoddard B.L."/>
            <person name="Szybalski W."/>
            <person name="Trautner T.A."/>
            <person name="Van Etten J.L."/>
            <person name="Vitor J.M."/>
            <person name="Wilson G.G."/>
            <person name="Xu S.Y."/>
        </authorList>
    </citation>
    <scope>NOMENCLATURE</scope>
</reference>
<proteinExistence type="inferred from homology"/>